<protein>
    <recommendedName>
        <fullName evidence="4">Solute-binding protein Bpro_4736</fullName>
    </recommendedName>
</protein>
<organism evidence="5">
    <name type="scientific">Polaromonas sp. (strain JS666 / ATCC BAA-500)</name>
    <dbReference type="NCBI Taxonomy" id="296591"/>
    <lineage>
        <taxon>Bacteria</taxon>
        <taxon>Pseudomonadati</taxon>
        <taxon>Pseudomonadota</taxon>
        <taxon>Betaproteobacteria</taxon>
        <taxon>Burkholderiales</taxon>
        <taxon>Comamonadaceae</taxon>
        <taxon>Polaromonas</taxon>
    </lineage>
</organism>
<reference key="1">
    <citation type="journal article" date="2008" name="Appl. Environ. Microbiol.">
        <title>The genome of Polaromonas sp. strain JS666: insights into the evolution of a hydrocarbon- and xenobiotic-degrading bacterium, and features of relevance to biotechnology.</title>
        <authorList>
            <person name="Mattes T.E."/>
            <person name="Alexander A.K."/>
            <person name="Richardson P.M."/>
            <person name="Munk A.C."/>
            <person name="Han C.S."/>
            <person name="Stothard P."/>
            <person name="Coleman N.V."/>
        </authorList>
    </citation>
    <scope>NUCLEOTIDE SEQUENCE [LARGE SCALE GENOMIC DNA]</scope>
    <source>
        <strain>JS666 / ATCC BAA-500</strain>
    </source>
</reference>
<reference evidence="6 7" key="2">
    <citation type="journal article" date="2015" name="Biochemistry">
        <title>Experimental strategies for functional annotation and metabolism discovery: targeted screening of solute binding proteins and unbiased panning of metabolomes.</title>
        <authorList>
            <person name="Vetting M.W."/>
            <person name="Al-Obaidi N."/>
            <person name="Zhao S."/>
            <person name="San Francisco B."/>
            <person name="Kim J."/>
            <person name="Wichelecki D.J."/>
            <person name="Bouvier J.T."/>
            <person name="Solbiati J.O."/>
            <person name="Vu H."/>
            <person name="Zhang X."/>
            <person name="Rodionov D.A."/>
            <person name="Love J.D."/>
            <person name="Hillerich B.S."/>
            <person name="Seidel R.D."/>
            <person name="Quinn R.J."/>
            <person name="Osterman A.L."/>
            <person name="Cronan J.E."/>
            <person name="Jacobson M.P."/>
            <person name="Gerlt J.A."/>
            <person name="Almo S.C."/>
        </authorList>
    </citation>
    <scope>X-RAY CRYSTALLOGRAPHY (1.05 ANGSTROMS) IN COMPLEX WITH PHENYLGLYOXYLATE</scope>
    <scope>FUNCTION</scope>
</reference>
<keyword id="KW-0002">3D-structure</keyword>
<keyword id="KW-0574">Periplasm</keyword>
<keyword id="KW-1185">Reference proteome</keyword>
<keyword id="KW-0732">Signal</keyword>
<keyword id="KW-0813">Transport</keyword>
<dbReference type="EMBL" id="CP000316">
    <property type="protein sequence ID" value="ABE46615.1"/>
    <property type="molecule type" value="Genomic_DNA"/>
</dbReference>
<dbReference type="RefSeq" id="WP_011485600.1">
    <property type="nucleotide sequence ID" value="NC_007948.1"/>
</dbReference>
<dbReference type="PDB" id="4MNC">
    <property type="method" value="X-ray"/>
    <property type="resolution" value="1.05 A"/>
    <property type="chains" value="A=1-325"/>
</dbReference>
<dbReference type="PDB" id="4MNI">
    <property type="method" value="X-ray"/>
    <property type="resolution" value="1.90 A"/>
    <property type="chains" value="A=1-325"/>
</dbReference>
<dbReference type="PDBsum" id="4MNC"/>
<dbReference type="PDBsum" id="4MNI"/>
<dbReference type="SMR" id="Q122C7"/>
<dbReference type="STRING" id="296591.Bpro_4736"/>
<dbReference type="KEGG" id="pol:Bpro_4736"/>
<dbReference type="eggNOG" id="COG1638">
    <property type="taxonomic scope" value="Bacteria"/>
</dbReference>
<dbReference type="HOGENOM" id="CLU_068413_0_0_4"/>
<dbReference type="OrthoDB" id="6073716at2"/>
<dbReference type="EvolutionaryTrace" id="Q122C7"/>
<dbReference type="Proteomes" id="UP000001983">
    <property type="component" value="Chromosome"/>
</dbReference>
<dbReference type="GO" id="GO:0042597">
    <property type="term" value="C:periplasmic space"/>
    <property type="evidence" value="ECO:0007669"/>
    <property type="project" value="UniProtKB-SubCell"/>
</dbReference>
<dbReference type="GO" id="GO:0055085">
    <property type="term" value="P:transmembrane transport"/>
    <property type="evidence" value="ECO:0007669"/>
    <property type="project" value="InterPro"/>
</dbReference>
<dbReference type="CDD" id="cd13667">
    <property type="entry name" value="PBP2_TRAP_DctP1"/>
    <property type="match status" value="1"/>
</dbReference>
<dbReference type="Gene3D" id="3.40.190.170">
    <property type="entry name" value="Bacterial extracellular solute-binding protein, family 7"/>
    <property type="match status" value="1"/>
</dbReference>
<dbReference type="InterPro" id="IPR018389">
    <property type="entry name" value="DctP_fam"/>
</dbReference>
<dbReference type="InterPro" id="IPR038404">
    <property type="entry name" value="TRAP_DctP_sf"/>
</dbReference>
<dbReference type="NCBIfam" id="NF037995">
    <property type="entry name" value="TRAP_S1"/>
    <property type="match status" value="1"/>
</dbReference>
<dbReference type="PANTHER" id="PTHR33376">
    <property type="match status" value="1"/>
</dbReference>
<dbReference type="PANTHER" id="PTHR33376:SF5">
    <property type="entry name" value="EXTRACYTOPLASMIC SOLUTE RECEPTOR PROTEIN"/>
    <property type="match status" value="1"/>
</dbReference>
<dbReference type="Pfam" id="PF03480">
    <property type="entry name" value="DctP"/>
    <property type="match status" value="1"/>
</dbReference>
<feature type="signal peptide" evidence="2">
    <location>
        <begin position="1"/>
        <end position="27"/>
    </location>
</feature>
<feature type="chain" id="PRO_5004180668" description="Solute-binding protein Bpro_4736" evidence="2">
    <location>
        <begin position="28"/>
        <end position="325"/>
    </location>
</feature>
<feature type="binding site" evidence="6 7">
    <location>
        <begin position="168"/>
        <end position="173"/>
    </location>
    <ligand>
        <name>phenylglyoxylate</name>
        <dbReference type="ChEBI" id="CHEBI:36656"/>
    </ligand>
</feature>
<feature type="strand" evidence="8">
    <location>
        <begin position="30"/>
        <end position="38"/>
    </location>
</feature>
<feature type="helix" evidence="8">
    <location>
        <begin position="43"/>
        <end position="58"/>
    </location>
</feature>
<feature type="turn" evidence="8">
    <location>
        <begin position="60"/>
        <end position="62"/>
    </location>
</feature>
<feature type="strand" evidence="8">
    <location>
        <begin position="63"/>
        <end position="70"/>
    </location>
</feature>
<feature type="turn" evidence="8">
    <location>
        <begin position="71"/>
        <end position="73"/>
    </location>
</feature>
<feature type="helix" evidence="8">
    <location>
        <begin position="76"/>
        <end position="78"/>
    </location>
</feature>
<feature type="helix" evidence="8">
    <location>
        <begin position="79"/>
        <end position="84"/>
    </location>
</feature>
<feature type="strand" evidence="8">
    <location>
        <begin position="87"/>
        <end position="93"/>
    </location>
</feature>
<feature type="helix" evidence="8">
    <location>
        <begin position="95"/>
        <end position="97"/>
    </location>
</feature>
<feature type="turn" evidence="8">
    <location>
        <begin position="99"/>
        <end position="101"/>
    </location>
</feature>
<feature type="helix" evidence="8">
    <location>
        <begin position="103"/>
        <end position="110"/>
    </location>
</feature>
<feature type="helix" evidence="8">
    <location>
        <begin position="115"/>
        <end position="121"/>
    </location>
</feature>
<feature type="helix" evidence="8">
    <location>
        <begin position="123"/>
        <end position="135"/>
    </location>
</feature>
<feature type="strand" evidence="8">
    <location>
        <begin position="136"/>
        <end position="144"/>
    </location>
</feature>
<feature type="strand" evidence="8">
    <location>
        <begin position="149"/>
        <end position="155"/>
    </location>
</feature>
<feature type="strand" evidence="8">
    <location>
        <begin position="158"/>
        <end position="160"/>
    </location>
</feature>
<feature type="strand" evidence="8">
    <location>
        <begin position="166"/>
        <end position="169"/>
    </location>
</feature>
<feature type="helix" evidence="8">
    <location>
        <begin position="171"/>
        <end position="173"/>
    </location>
</feature>
<feature type="helix" evidence="8">
    <location>
        <begin position="174"/>
        <end position="179"/>
    </location>
</feature>
<feature type="strand" evidence="8">
    <location>
        <begin position="183"/>
        <end position="186"/>
    </location>
</feature>
<feature type="helix" evidence="8">
    <location>
        <begin position="189"/>
        <end position="191"/>
    </location>
</feature>
<feature type="helix" evidence="8">
    <location>
        <begin position="192"/>
        <end position="197"/>
    </location>
</feature>
<feature type="strand" evidence="8">
    <location>
        <begin position="202"/>
        <end position="209"/>
    </location>
</feature>
<feature type="turn" evidence="8">
    <location>
        <begin position="211"/>
        <end position="215"/>
    </location>
</feature>
<feature type="helix" evidence="8">
    <location>
        <begin position="216"/>
        <end position="219"/>
    </location>
</feature>
<feature type="strand" evidence="8">
    <location>
        <begin position="222"/>
        <end position="226"/>
    </location>
</feature>
<feature type="strand" evidence="8">
    <location>
        <begin position="233"/>
        <end position="238"/>
    </location>
</feature>
<feature type="helix" evidence="8">
    <location>
        <begin position="239"/>
        <end position="244"/>
    </location>
</feature>
<feature type="helix" evidence="8">
    <location>
        <begin position="247"/>
        <end position="262"/>
    </location>
</feature>
<feature type="helix" evidence="8">
    <location>
        <begin position="263"/>
        <end position="265"/>
    </location>
</feature>
<feature type="helix" evidence="8">
    <location>
        <begin position="266"/>
        <end position="280"/>
    </location>
</feature>
<feature type="strand" evidence="8">
    <location>
        <begin position="284"/>
        <end position="286"/>
    </location>
</feature>
<feature type="helix" evidence="8">
    <location>
        <begin position="290"/>
        <end position="311"/>
    </location>
</feature>
<feature type="helix" evidence="8">
    <location>
        <begin position="313"/>
        <end position="323"/>
    </location>
</feature>
<sequence>MKTRTLKVLKPTLALLLAASFSAGALAQEVTLRLVSAFPENGIYVQRLLPWIAKVNAEGKGVLQINFLGGPKAIPTFEAGNAVKTGVVDMAMNTGAFYTNVMPEADFLKLTQIPVAEQRKNGAFDAINKVWNEKGNTQYLARMVENQPFHIYTNKKIDKPDLSGQKIRISPVYRDFFQALNANVVTTPPGEVYTALERGVVDGYGWPIGGIFDLNWQEKTKFRVDPGFYDAEVSLTMNLPAYKKLTDAQRNYLQKQLLVLEAENTFWTRYGNVETARQETAGIQTIKFDAATSKAFREKAYEVGWAGAMKQSPEVAARFKTLFSK</sequence>
<gene>
    <name evidence="5" type="ordered locus">Bpro_4736</name>
</gene>
<comment type="function">
    <text evidence="3 4">Solute-binding protein that binds phenylglyoxylate (in vitro) (PubMed:25540822). Probably part of a tripartite ATP-independent periplasmic (TRAP) transport system that mediates solute transport into the cytoplasm.</text>
</comment>
<comment type="subunit">
    <text evidence="1">The complex is comprised of an extracytoplasmic solute-binding protein and a heteromeric permease formed by two transmembrane proteins.</text>
</comment>
<comment type="subcellular location">
    <subcellularLocation>
        <location evidence="1">Periplasm</location>
    </subcellularLocation>
</comment>
<comment type="similarity">
    <text evidence="4">Belongs to the bacterial solute-binding protein 7 family.</text>
</comment>
<accession>Q122C7</accession>
<proteinExistence type="evidence at protein level"/>
<name>DCTP2_POLSJ</name>
<evidence type="ECO:0000250" key="1">
    <source>
        <dbReference type="UniProtKB" id="P37735"/>
    </source>
</evidence>
<evidence type="ECO:0000255" key="2"/>
<evidence type="ECO:0000269" key="3">
    <source>
    </source>
</evidence>
<evidence type="ECO:0000305" key="4"/>
<evidence type="ECO:0000312" key="5">
    <source>
        <dbReference type="EMBL" id="ABE46615.1"/>
    </source>
</evidence>
<evidence type="ECO:0007744" key="6">
    <source>
        <dbReference type="PDB" id="4MNC"/>
    </source>
</evidence>
<evidence type="ECO:0007744" key="7">
    <source>
        <dbReference type="PDB" id="4MNI"/>
    </source>
</evidence>
<evidence type="ECO:0007829" key="8">
    <source>
        <dbReference type="PDB" id="4MNC"/>
    </source>
</evidence>